<organism>
    <name type="scientific">Francisella tularensis subsp. tularensis (strain FSC 198)</name>
    <dbReference type="NCBI Taxonomy" id="393115"/>
    <lineage>
        <taxon>Bacteria</taxon>
        <taxon>Pseudomonadati</taxon>
        <taxon>Pseudomonadota</taxon>
        <taxon>Gammaproteobacteria</taxon>
        <taxon>Thiotrichales</taxon>
        <taxon>Francisellaceae</taxon>
        <taxon>Francisella</taxon>
    </lineage>
</organism>
<evidence type="ECO:0000255" key="1">
    <source>
        <dbReference type="HAMAP-Rule" id="MF_00685"/>
    </source>
</evidence>
<name>GLGB_FRAT1</name>
<proteinExistence type="inferred from homology"/>
<dbReference type="EC" id="2.4.1.18" evidence="1"/>
<dbReference type="EMBL" id="AM286280">
    <property type="protein sequence ID" value="CAL08429.1"/>
    <property type="molecule type" value="Genomic_DNA"/>
</dbReference>
<dbReference type="RefSeq" id="WP_003020147.1">
    <property type="nucleotide sequence ID" value="NC_008245.1"/>
</dbReference>
<dbReference type="SMR" id="Q14J36"/>
<dbReference type="CAZy" id="CBM48">
    <property type="family name" value="Carbohydrate-Binding Module Family 48"/>
</dbReference>
<dbReference type="CAZy" id="GH13">
    <property type="family name" value="Glycoside Hydrolase Family 13"/>
</dbReference>
<dbReference type="KEGG" id="ftf:FTF0413c"/>
<dbReference type="HOGENOM" id="CLU_004245_3_2_6"/>
<dbReference type="UniPathway" id="UPA00164"/>
<dbReference type="GO" id="GO:0005829">
    <property type="term" value="C:cytosol"/>
    <property type="evidence" value="ECO:0007669"/>
    <property type="project" value="TreeGrafter"/>
</dbReference>
<dbReference type="GO" id="GO:0003844">
    <property type="term" value="F:1,4-alpha-glucan branching enzyme activity"/>
    <property type="evidence" value="ECO:0007669"/>
    <property type="project" value="UniProtKB-UniRule"/>
</dbReference>
<dbReference type="GO" id="GO:0043169">
    <property type="term" value="F:cation binding"/>
    <property type="evidence" value="ECO:0007669"/>
    <property type="project" value="InterPro"/>
</dbReference>
<dbReference type="GO" id="GO:0004553">
    <property type="term" value="F:hydrolase activity, hydrolyzing O-glycosyl compounds"/>
    <property type="evidence" value="ECO:0007669"/>
    <property type="project" value="InterPro"/>
</dbReference>
<dbReference type="GO" id="GO:0005978">
    <property type="term" value="P:glycogen biosynthetic process"/>
    <property type="evidence" value="ECO:0007669"/>
    <property type="project" value="UniProtKB-UniRule"/>
</dbReference>
<dbReference type="CDD" id="cd11322">
    <property type="entry name" value="AmyAc_Glg_BE"/>
    <property type="match status" value="1"/>
</dbReference>
<dbReference type="CDD" id="cd02855">
    <property type="entry name" value="E_set_GBE_prok_N"/>
    <property type="match status" value="1"/>
</dbReference>
<dbReference type="FunFam" id="2.60.40.1180:FF:000002">
    <property type="entry name" value="1,4-alpha-glucan branching enzyme GlgB"/>
    <property type="match status" value="1"/>
</dbReference>
<dbReference type="FunFam" id="3.20.20.80:FF:000003">
    <property type="entry name" value="1,4-alpha-glucan branching enzyme GlgB"/>
    <property type="match status" value="1"/>
</dbReference>
<dbReference type="Gene3D" id="3.20.20.80">
    <property type="entry name" value="Glycosidases"/>
    <property type="match status" value="1"/>
</dbReference>
<dbReference type="Gene3D" id="2.60.40.1180">
    <property type="entry name" value="Golgi alpha-mannosidase II"/>
    <property type="match status" value="1"/>
</dbReference>
<dbReference type="Gene3D" id="2.60.40.10">
    <property type="entry name" value="Immunoglobulins"/>
    <property type="match status" value="1"/>
</dbReference>
<dbReference type="HAMAP" id="MF_00685">
    <property type="entry name" value="GlgB"/>
    <property type="match status" value="1"/>
</dbReference>
<dbReference type="InterPro" id="IPR006048">
    <property type="entry name" value="A-amylase/branching_C"/>
</dbReference>
<dbReference type="InterPro" id="IPR037439">
    <property type="entry name" value="Branching_enzy"/>
</dbReference>
<dbReference type="InterPro" id="IPR006407">
    <property type="entry name" value="GlgB"/>
</dbReference>
<dbReference type="InterPro" id="IPR044143">
    <property type="entry name" value="GlgB_N_E_set_prok"/>
</dbReference>
<dbReference type="InterPro" id="IPR006047">
    <property type="entry name" value="Glyco_hydro_13_cat_dom"/>
</dbReference>
<dbReference type="InterPro" id="IPR004193">
    <property type="entry name" value="Glyco_hydro_13_N"/>
</dbReference>
<dbReference type="InterPro" id="IPR013780">
    <property type="entry name" value="Glyco_hydro_b"/>
</dbReference>
<dbReference type="InterPro" id="IPR017853">
    <property type="entry name" value="Glycoside_hydrolase_SF"/>
</dbReference>
<dbReference type="InterPro" id="IPR013783">
    <property type="entry name" value="Ig-like_fold"/>
</dbReference>
<dbReference type="InterPro" id="IPR014756">
    <property type="entry name" value="Ig_E-set"/>
</dbReference>
<dbReference type="NCBIfam" id="TIGR01515">
    <property type="entry name" value="branching_enzym"/>
    <property type="match status" value="1"/>
</dbReference>
<dbReference type="NCBIfam" id="NF003811">
    <property type="entry name" value="PRK05402.1"/>
    <property type="match status" value="1"/>
</dbReference>
<dbReference type="NCBIfam" id="NF008967">
    <property type="entry name" value="PRK12313.1"/>
    <property type="match status" value="1"/>
</dbReference>
<dbReference type="PANTHER" id="PTHR43651">
    <property type="entry name" value="1,4-ALPHA-GLUCAN-BRANCHING ENZYME"/>
    <property type="match status" value="1"/>
</dbReference>
<dbReference type="PANTHER" id="PTHR43651:SF3">
    <property type="entry name" value="1,4-ALPHA-GLUCAN-BRANCHING ENZYME"/>
    <property type="match status" value="1"/>
</dbReference>
<dbReference type="Pfam" id="PF00128">
    <property type="entry name" value="Alpha-amylase"/>
    <property type="match status" value="2"/>
</dbReference>
<dbReference type="Pfam" id="PF02806">
    <property type="entry name" value="Alpha-amylase_C"/>
    <property type="match status" value="1"/>
</dbReference>
<dbReference type="Pfam" id="PF02922">
    <property type="entry name" value="CBM_48"/>
    <property type="match status" value="1"/>
</dbReference>
<dbReference type="PIRSF" id="PIRSF000463">
    <property type="entry name" value="GlgB"/>
    <property type="match status" value="1"/>
</dbReference>
<dbReference type="SMART" id="SM00642">
    <property type="entry name" value="Aamy"/>
    <property type="match status" value="1"/>
</dbReference>
<dbReference type="SUPFAM" id="SSF51445">
    <property type="entry name" value="(Trans)glycosidases"/>
    <property type="match status" value="1"/>
</dbReference>
<dbReference type="SUPFAM" id="SSF81296">
    <property type="entry name" value="E set domains"/>
    <property type="match status" value="1"/>
</dbReference>
<dbReference type="SUPFAM" id="SSF51011">
    <property type="entry name" value="Glycosyl hydrolase domain"/>
    <property type="match status" value="1"/>
</dbReference>
<feature type="chain" id="PRO_0000260657" description="1,4-alpha-glucan branching enzyme GlgB">
    <location>
        <begin position="1"/>
        <end position="640"/>
    </location>
</feature>
<feature type="active site" description="Nucleophile" evidence="1">
    <location>
        <position position="318"/>
    </location>
</feature>
<feature type="active site" description="Proton donor" evidence="1">
    <location>
        <position position="371"/>
    </location>
</feature>
<gene>
    <name evidence="1" type="primary">glgB</name>
    <name type="ordered locus">FTF0413c</name>
</gene>
<comment type="function">
    <text evidence="1">Catalyzes the formation of the alpha-1,6-glucosidic linkages in glycogen by scission of a 1,4-alpha-linked oligosaccharide from growing alpha-1,4-glucan chains and the subsequent attachment of the oligosaccharide to the alpha-1,6 position.</text>
</comment>
<comment type="catalytic activity">
    <reaction evidence="1">
        <text>Transfers a segment of a (1-&gt;4)-alpha-D-glucan chain to a primary hydroxy group in a similar glucan chain.</text>
        <dbReference type="EC" id="2.4.1.18"/>
    </reaction>
</comment>
<comment type="pathway">
    <text evidence="1">Glycan biosynthesis; glycogen biosynthesis.</text>
</comment>
<comment type="subunit">
    <text evidence="1">Monomer.</text>
</comment>
<comment type="similarity">
    <text evidence="1">Belongs to the glycosyl hydrolase 13 family. GlgB subfamily.</text>
</comment>
<protein>
    <recommendedName>
        <fullName evidence="1">1,4-alpha-glucan branching enzyme GlgB</fullName>
        <ecNumber evidence="1">2.4.1.18</ecNumber>
    </recommendedName>
    <alternativeName>
        <fullName evidence="1">1,4-alpha-D-glucan:1,4-alpha-D-glucan 6-glucosyl-transferase</fullName>
    </alternativeName>
    <alternativeName>
        <fullName evidence="1">Alpha-(1-&gt;4)-glucan branching enzyme</fullName>
    </alternativeName>
    <alternativeName>
        <fullName evidence="1">Glycogen branching enzyme</fullName>
        <shortName evidence="1">BE</shortName>
    </alternativeName>
</protein>
<reference key="1">
    <citation type="journal article" date="2007" name="PLoS ONE">
        <title>Genome sequencing shows that European isolates of Francisella tularensis subspecies tularensis are almost identical to US laboratory strain Schu S4.</title>
        <authorList>
            <person name="Chaudhuri R.R."/>
            <person name="Ren C.-P."/>
            <person name="Desmond L."/>
            <person name="Vincent G.A."/>
            <person name="Silman N.J."/>
            <person name="Brehm J.K."/>
            <person name="Elmore M.J."/>
            <person name="Hudson M.J."/>
            <person name="Forsman M."/>
            <person name="Isherwood K.E."/>
            <person name="Gurycova D."/>
            <person name="Minton N.P."/>
            <person name="Titball R.W."/>
            <person name="Pallen M.J."/>
            <person name="Vipond R."/>
        </authorList>
    </citation>
    <scope>NUCLEOTIDE SEQUENCE [LARGE SCALE GENOMIC DNA]</scope>
    <source>
        <strain>FSC 198</strain>
    </source>
</reference>
<keyword id="KW-0119">Carbohydrate metabolism</keyword>
<keyword id="KW-0320">Glycogen biosynthesis</keyword>
<keyword id="KW-0321">Glycogen metabolism</keyword>
<keyword id="KW-0328">Glycosyltransferase</keyword>
<keyword id="KW-0808">Transferase</keyword>
<sequence length="640" mass="74805">MKNKNSEQNTHSTIGEQDIHYFHEGKHIYAYEFMGAHKACEEGIEGIRFTTWAPNAKSICVIGDFNYWQVEDKNYMEPITDAGLWSVFIPNAKNGDKYKFVVTNKDTNHYVYKSDPYAFFSELRPNTASIITTETQYTWSDDKWLEKRAKTNYYDNPMNVYELHLASWKTKNGKFLTYDELSETLPQYIKEMGYTHVEFMPLHEHPLDASWGYQPTGFYSVNSRHGDIIGLKRLVDKLHNNDIGVILDWVPGHFCKDQHGLIYFDGSPCYEYQEPTKAINKGWGTHNFDLGRNEVKCFLISNAMYWINEFHIDGLRVDAVSNILYLNYDREDGQWIPNIYGGHENLEGIAFLKELNGVLKHTCKGVITIAEESSSWPDISTPVEKGGLGFDFKWNMGWMNDTLRYISLDPVYRKYHHNLITFSMVYHYSEKFILSISHDEVVHGKKSLINKMWGDLWNKYAGLRLYMSYMIGHPGKKLIFMGSEFVQFVEWREYEQLQWQVVDQYESHKQTLHFFKKLNDFYHNETALWQCDYNHHGFRWIDADNSQQSILSFIRSSKDNKQKLIFICNFTPVTYYDYHLGVPDAGSYKEVFNSDNLEFGGSGQVMATEIFSSLQSSHGFEQRITIKIPPMATLVLKLIK</sequence>
<accession>Q14J36</accession>